<accession>P46690</accession>
<accession>O49593</accession>
<gene>
    <name type="primary">GASA4</name>
    <name type="ordered locus">At5g15230</name>
    <name type="ORF">F8M21.120</name>
</gene>
<sequence>MAKSYGAIFLLTLIVLFMLQTMVMASSGSNVKWSQKRYGPGSLKRTQCPSECDRRCKKTQYHKACITFCNKCCRKCLCVPPGYYGNKQVCSCYNNWKTQEGGPKCP</sequence>
<reference key="1">
    <citation type="journal article" date="1995" name="Plant Mol. Biol.">
        <title>GASA, a gibberellin-regulated gene family from Arabidopsis thaliana related to the tomato GAST1 gene.</title>
        <authorList>
            <person name="Herzog M."/>
            <person name="Dorne A.-M."/>
            <person name="Grellet F."/>
        </authorList>
    </citation>
    <scope>NUCLEOTIDE SEQUENCE [MRNA]</scope>
    <source>
        <strain>cv. C24</strain>
        <tissue>Flower bud</tissue>
    </source>
</reference>
<reference key="2">
    <citation type="journal article" date="1998" name="Plant Mol. Biol.">
        <title>Expression patterns of GASA genes in Arabidopsis thaliana: the GASA4 gene is up-regulated by gibberellins in meristematic regions.</title>
        <authorList>
            <person name="Aubert D."/>
            <person name="Chevillard M."/>
            <person name="Dorne A.-M."/>
            <person name="Arlaud G."/>
            <person name="Herzog M."/>
        </authorList>
    </citation>
    <scope>NUCLEOTIDE SEQUENCE [GENOMIC DNA]</scope>
    <scope>TISSUE SPECIFICITY</scope>
    <scope>INDUCTION</scope>
</reference>
<reference key="3">
    <citation type="journal article" date="2000" name="Nature">
        <title>Sequence and analysis of chromosome 5 of the plant Arabidopsis thaliana.</title>
        <authorList>
            <person name="Tabata S."/>
            <person name="Kaneko T."/>
            <person name="Nakamura Y."/>
            <person name="Kotani H."/>
            <person name="Kato T."/>
            <person name="Asamizu E."/>
            <person name="Miyajima N."/>
            <person name="Sasamoto S."/>
            <person name="Kimura T."/>
            <person name="Hosouchi T."/>
            <person name="Kawashima K."/>
            <person name="Kohara M."/>
            <person name="Matsumoto M."/>
            <person name="Matsuno A."/>
            <person name="Muraki A."/>
            <person name="Nakayama S."/>
            <person name="Nakazaki N."/>
            <person name="Naruo K."/>
            <person name="Okumura S."/>
            <person name="Shinpo S."/>
            <person name="Takeuchi C."/>
            <person name="Wada T."/>
            <person name="Watanabe A."/>
            <person name="Yamada M."/>
            <person name="Yasuda M."/>
            <person name="Sato S."/>
            <person name="de la Bastide M."/>
            <person name="Huang E."/>
            <person name="Spiegel L."/>
            <person name="Gnoj L."/>
            <person name="O'Shaughnessy A."/>
            <person name="Preston R."/>
            <person name="Habermann K."/>
            <person name="Murray J."/>
            <person name="Johnson D."/>
            <person name="Rohlfing T."/>
            <person name="Nelson J."/>
            <person name="Stoneking T."/>
            <person name="Pepin K."/>
            <person name="Spieth J."/>
            <person name="Sekhon M."/>
            <person name="Armstrong J."/>
            <person name="Becker M."/>
            <person name="Belter E."/>
            <person name="Cordum H."/>
            <person name="Cordes M."/>
            <person name="Courtney L."/>
            <person name="Courtney W."/>
            <person name="Dante M."/>
            <person name="Du H."/>
            <person name="Edwards J."/>
            <person name="Fryman J."/>
            <person name="Haakensen B."/>
            <person name="Lamar E."/>
            <person name="Latreille P."/>
            <person name="Leonard S."/>
            <person name="Meyer R."/>
            <person name="Mulvaney E."/>
            <person name="Ozersky P."/>
            <person name="Riley A."/>
            <person name="Strowmatt C."/>
            <person name="Wagner-McPherson C."/>
            <person name="Wollam A."/>
            <person name="Yoakum M."/>
            <person name="Bell M."/>
            <person name="Dedhia N."/>
            <person name="Parnell L."/>
            <person name="Shah R."/>
            <person name="Rodriguez M."/>
            <person name="Hoon See L."/>
            <person name="Vil D."/>
            <person name="Baker J."/>
            <person name="Kirchoff K."/>
            <person name="Toth K."/>
            <person name="King L."/>
            <person name="Bahret A."/>
            <person name="Miller B."/>
            <person name="Marra M.A."/>
            <person name="Martienssen R."/>
            <person name="McCombie W.R."/>
            <person name="Wilson R.K."/>
            <person name="Murphy G."/>
            <person name="Bancroft I."/>
            <person name="Volckaert G."/>
            <person name="Wambutt R."/>
            <person name="Duesterhoeft A."/>
            <person name="Stiekema W."/>
            <person name="Pohl T."/>
            <person name="Entian K.-D."/>
            <person name="Terryn N."/>
            <person name="Hartley N."/>
            <person name="Bent E."/>
            <person name="Johnson S."/>
            <person name="Langham S.-A."/>
            <person name="McCullagh B."/>
            <person name="Robben J."/>
            <person name="Grymonprez B."/>
            <person name="Zimmermann W."/>
            <person name="Ramsperger U."/>
            <person name="Wedler H."/>
            <person name="Balke K."/>
            <person name="Wedler E."/>
            <person name="Peters S."/>
            <person name="van Staveren M."/>
            <person name="Dirkse W."/>
            <person name="Mooijman P."/>
            <person name="Klein Lankhorst R."/>
            <person name="Weitzenegger T."/>
            <person name="Bothe G."/>
            <person name="Rose M."/>
            <person name="Hauf J."/>
            <person name="Berneiser S."/>
            <person name="Hempel S."/>
            <person name="Feldpausch M."/>
            <person name="Lamberth S."/>
            <person name="Villarroel R."/>
            <person name="Gielen J."/>
            <person name="Ardiles W."/>
            <person name="Bents O."/>
            <person name="Lemcke K."/>
            <person name="Kolesov G."/>
            <person name="Mayer K.F.X."/>
            <person name="Rudd S."/>
            <person name="Schoof H."/>
            <person name="Schueller C."/>
            <person name="Zaccaria P."/>
            <person name="Mewes H.-W."/>
            <person name="Bevan M."/>
            <person name="Fransz P.F."/>
        </authorList>
    </citation>
    <scope>NUCLEOTIDE SEQUENCE [LARGE SCALE GENOMIC DNA]</scope>
    <source>
        <strain>cv. Columbia</strain>
    </source>
</reference>
<reference key="4">
    <citation type="journal article" date="2017" name="Plant J.">
        <title>Araport11: a complete reannotation of the Arabidopsis thaliana reference genome.</title>
        <authorList>
            <person name="Cheng C.Y."/>
            <person name="Krishnakumar V."/>
            <person name="Chan A.P."/>
            <person name="Thibaud-Nissen F."/>
            <person name="Schobel S."/>
            <person name="Town C.D."/>
        </authorList>
    </citation>
    <scope>GENOME REANNOTATION</scope>
    <source>
        <strain>cv. Columbia</strain>
    </source>
</reference>
<reference key="5">
    <citation type="journal article" date="2003" name="Science">
        <title>Empirical analysis of transcriptional activity in the Arabidopsis genome.</title>
        <authorList>
            <person name="Yamada K."/>
            <person name="Lim J."/>
            <person name="Dale J.M."/>
            <person name="Chen H."/>
            <person name="Shinn P."/>
            <person name="Palm C.J."/>
            <person name="Southwick A.M."/>
            <person name="Wu H.C."/>
            <person name="Kim C.J."/>
            <person name="Nguyen M."/>
            <person name="Pham P.K."/>
            <person name="Cheuk R.F."/>
            <person name="Karlin-Newmann G."/>
            <person name="Liu S.X."/>
            <person name="Lam B."/>
            <person name="Sakano H."/>
            <person name="Wu T."/>
            <person name="Yu G."/>
            <person name="Miranda M."/>
            <person name="Quach H.L."/>
            <person name="Tripp M."/>
            <person name="Chang C.H."/>
            <person name="Lee J.M."/>
            <person name="Toriumi M.J."/>
            <person name="Chan M.M."/>
            <person name="Tang C.C."/>
            <person name="Onodera C.S."/>
            <person name="Deng J.M."/>
            <person name="Akiyama K."/>
            <person name="Ansari Y."/>
            <person name="Arakawa T."/>
            <person name="Banh J."/>
            <person name="Banno F."/>
            <person name="Bowser L."/>
            <person name="Brooks S.Y."/>
            <person name="Carninci P."/>
            <person name="Chao Q."/>
            <person name="Choy N."/>
            <person name="Enju A."/>
            <person name="Goldsmith A.D."/>
            <person name="Gurjal M."/>
            <person name="Hansen N.F."/>
            <person name="Hayashizaki Y."/>
            <person name="Johnson-Hopson C."/>
            <person name="Hsuan V.W."/>
            <person name="Iida K."/>
            <person name="Karnes M."/>
            <person name="Khan S."/>
            <person name="Koesema E."/>
            <person name="Ishida J."/>
            <person name="Jiang P.X."/>
            <person name="Jones T."/>
            <person name="Kawai J."/>
            <person name="Kamiya A."/>
            <person name="Meyers C."/>
            <person name="Nakajima M."/>
            <person name="Narusaka M."/>
            <person name="Seki M."/>
            <person name="Sakurai T."/>
            <person name="Satou M."/>
            <person name="Tamse R."/>
            <person name="Vaysberg M."/>
            <person name="Wallender E.K."/>
            <person name="Wong C."/>
            <person name="Yamamura Y."/>
            <person name="Yuan S."/>
            <person name="Shinozaki K."/>
            <person name="Davis R.W."/>
            <person name="Theologis A."/>
            <person name="Ecker J.R."/>
        </authorList>
    </citation>
    <scope>NUCLEOTIDE SEQUENCE [LARGE SCALE MRNA]</scope>
    <source>
        <strain>cv. Columbia</strain>
    </source>
</reference>
<reference key="6">
    <citation type="journal article" date="2007" name="Plant Cell Physiol.">
        <title>GASA4, one of the 14-member Arabidopsis GASA family of small polypeptides, regulates flowering and seed development.</title>
        <authorList>
            <person name="Roxrud I."/>
            <person name="Lid S.E."/>
            <person name="Fletcher J.C."/>
            <person name="Schmidt E.D."/>
            <person name="Opsahl-Sorteberg H.G."/>
        </authorList>
    </citation>
    <scope>FUNCTION</scope>
    <scope>TISSUE SPECIFICITY</scope>
    <scope>DISRUPTION PHENOTYPE</scope>
</reference>
<reference key="7">
    <citation type="journal article" date="2010" name="Plant J.">
        <title>The Arabidopsis cysteine-rich protein GASA4 promotes GA responses and exhibits redox activity in bacteria and in planta.</title>
        <authorList>
            <person name="Rubinovich L."/>
            <person name="Weiss D."/>
        </authorList>
    </citation>
    <scope>FUNCTION</scope>
    <scope>MUTAGENESIS OF CYS-72; CYS-73; CYS-76 AND CYS-78</scope>
</reference>
<organism>
    <name type="scientific">Arabidopsis thaliana</name>
    <name type="common">Mouse-ear cress</name>
    <dbReference type="NCBI Taxonomy" id="3702"/>
    <lineage>
        <taxon>Eukaryota</taxon>
        <taxon>Viridiplantae</taxon>
        <taxon>Streptophyta</taxon>
        <taxon>Embryophyta</taxon>
        <taxon>Tracheophyta</taxon>
        <taxon>Spermatophyta</taxon>
        <taxon>Magnoliopsida</taxon>
        <taxon>eudicotyledons</taxon>
        <taxon>Gunneridae</taxon>
        <taxon>Pentapetalae</taxon>
        <taxon>rosids</taxon>
        <taxon>malvids</taxon>
        <taxon>Brassicales</taxon>
        <taxon>Brassicaceae</taxon>
        <taxon>Camelineae</taxon>
        <taxon>Arabidopsis</taxon>
    </lineage>
</organism>
<comment type="function">
    <text evidence="2 3">Gibberellin-regulated protein involved in the regulation of floral meristem and floral organ identity, and promotion of seed size and weight. May play a role in the promotion of gibberellin responses such as regulation of flowering under short-day conditions, seed germination and inhibition of gibberellin oxidase. Possesses redox activity in E.coli and may function in redox regulation in planta.</text>
</comment>
<comment type="subcellular location">
    <subcellularLocation>
        <location>Secreted</location>
    </subcellularLocation>
</comment>
<comment type="alternative products">
    <event type="alternative splicing"/>
    <isoform>
        <id>P46690-1</id>
        <name>1</name>
        <sequence type="displayed"/>
    </isoform>
    <text>A number of isoforms are produced. According to EST sequences.</text>
</comment>
<comment type="tissue specificity">
    <text evidence="2 4">Expressed in flower buds, style, stamen filaments, vasculature of petals, root phloem, vasculature of cotyledons and rosette leaves and developing embryo.</text>
</comment>
<comment type="induction">
    <text evidence="4">By gibberellins.</text>
</comment>
<comment type="PTM">
    <text>Six disulfide bonds may be present.</text>
</comment>
<comment type="disruption phenotype">
    <text evidence="2">Increased number of axillary inflorescence shoots and decreased seed weight.</text>
</comment>
<comment type="similarity">
    <text evidence="5">Belongs to the GASA family.</text>
</comment>
<proteinExistence type="evidence at protein level"/>
<name>GASA4_ARATH</name>
<protein>
    <recommendedName>
        <fullName>Gibberellin-regulated protein 4</fullName>
    </recommendedName>
    <alternativeName>
        <fullName>GAST1 protein homolog 4</fullName>
    </alternativeName>
</protein>
<feature type="signal peptide" evidence="1">
    <location>
        <begin position="1"/>
        <end position="25"/>
    </location>
</feature>
<feature type="chain" id="PRO_0000021325" description="Gibberellin-regulated protein 4">
    <location>
        <begin position="26"/>
        <end position="106"/>
    </location>
</feature>
<feature type="mutagenesis site" description="Loss of redox activity and ability to promote gibberellin responses; when associated with A-73; A-76 and A-78." evidence="3">
    <original>C</original>
    <variation>A</variation>
    <location>
        <position position="72"/>
    </location>
</feature>
<feature type="mutagenesis site" description="Loss of redox activity and ability to promote gibberellin responses; when associated with A-72; A-76 and A-78." evidence="3">
    <original>C</original>
    <variation>A</variation>
    <location>
        <position position="73"/>
    </location>
</feature>
<feature type="mutagenesis site" description="Loss of redox activity and ability to promote gibberellin responses; when associated with A-72; A-73 and A-78." evidence="3">
    <original>C</original>
    <variation>A</variation>
    <location>
        <position position="76"/>
    </location>
</feature>
<feature type="mutagenesis site" description="Loss of redox activity and ability to promote gibberellin responses; when associated with A-72; A-73 and A-76." evidence="3">
    <original>C</original>
    <variation>A</variation>
    <location>
        <position position="78"/>
    </location>
</feature>
<feature type="sequence conflict" description="In Ref. 1; AAA74480." evidence="5" ref="1">
    <original>S</original>
    <variation>R</variation>
    <location>
        <position position="34"/>
    </location>
</feature>
<evidence type="ECO:0000255" key="1"/>
<evidence type="ECO:0000269" key="2">
    <source>
    </source>
</evidence>
<evidence type="ECO:0000269" key="3">
    <source>
    </source>
</evidence>
<evidence type="ECO:0000269" key="4">
    <source>
    </source>
</evidence>
<evidence type="ECO:0000305" key="5"/>
<keyword id="KW-0025">Alternative splicing</keyword>
<keyword id="KW-1015">Disulfide bond</keyword>
<keyword id="KW-0939">Gibberellin signaling pathway</keyword>
<keyword id="KW-1185">Reference proteome</keyword>
<keyword id="KW-0964">Secreted</keyword>
<keyword id="KW-0732">Signal</keyword>
<dbReference type="EMBL" id="U15683">
    <property type="protein sequence ID" value="AAA74480.1"/>
    <property type="molecule type" value="mRNA"/>
</dbReference>
<dbReference type="EMBL" id="X98255">
    <property type="protein sequence ID" value="CAA66909.1"/>
    <property type="molecule type" value="Genomic_DNA"/>
</dbReference>
<dbReference type="EMBL" id="AL353993">
    <property type="protein sequence ID" value="CAB89333.1"/>
    <property type="molecule type" value="Genomic_DNA"/>
</dbReference>
<dbReference type="EMBL" id="CP002688">
    <property type="protein sequence ID" value="AED92132.1"/>
    <property type="molecule type" value="Genomic_DNA"/>
</dbReference>
<dbReference type="EMBL" id="AF360199">
    <property type="protein sequence ID" value="AAK25909.1"/>
    <property type="molecule type" value="mRNA"/>
</dbReference>
<dbReference type="EMBL" id="AY057601">
    <property type="protein sequence ID" value="AAL14396.1"/>
    <property type="molecule type" value="mRNA"/>
</dbReference>
<dbReference type="EMBL" id="AY040048">
    <property type="protein sequence ID" value="AAK64106.1"/>
    <property type="molecule type" value="mRNA"/>
</dbReference>
<dbReference type="PIR" id="S60232">
    <property type="entry name" value="S60232"/>
</dbReference>
<dbReference type="PIR" id="T49958">
    <property type="entry name" value="T49958"/>
</dbReference>
<dbReference type="RefSeq" id="NP_197027.1">
    <molecule id="P46690-1"/>
    <property type="nucleotide sequence ID" value="NM_121527.4"/>
</dbReference>
<dbReference type="SMR" id="P46690"/>
<dbReference type="BioGRID" id="16652">
    <property type="interactions" value="5"/>
</dbReference>
<dbReference type="FunCoup" id="P46690">
    <property type="interactions" value="56"/>
</dbReference>
<dbReference type="IntAct" id="P46690">
    <property type="interactions" value="4"/>
</dbReference>
<dbReference type="STRING" id="3702.P46690"/>
<dbReference type="PaxDb" id="3702-AT5G15230.1"/>
<dbReference type="ProteomicsDB" id="247359">
    <molecule id="P46690-1"/>
</dbReference>
<dbReference type="EnsemblPlants" id="AT5G15230.1">
    <molecule id="P46690-1"/>
    <property type="protein sequence ID" value="AT5G15230.1"/>
    <property type="gene ID" value="AT5G15230"/>
</dbReference>
<dbReference type="GeneID" id="831375"/>
<dbReference type="Gramene" id="AT5G15230.1">
    <molecule id="P46690-1"/>
    <property type="protein sequence ID" value="AT5G15230.1"/>
    <property type="gene ID" value="AT5G15230"/>
</dbReference>
<dbReference type="KEGG" id="ath:AT5G15230"/>
<dbReference type="Araport" id="AT5G15230"/>
<dbReference type="TAIR" id="AT5G15230">
    <property type="gene designation" value="GASA4"/>
</dbReference>
<dbReference type="eggNOG" id="ENOG502S17T">
    <property type="taxonomic scope" value="Eukaryota"/>
</dbReference>
<dbReference type="HOGENOM" id="CLU_142643_1_0_1"/>
<dbReference type="InParanoid" id="P46690"/>
<dbReference type="OrthoDB" id="1886938at2759"/>
<dbReference type="PhylomeDB" id="P46690"/>
<dbReference type="PRO" id="PR:P46690"/>
<dbReference type="Proteomes" id="UP000006548">
    <property type="component" value="Chromosome 5"/>
</dbReference>
<dbReference type="ExpressionAtlas" id="P46690">
    <property type="expression patterns" value="baseline and differential"/>
</dbReference>
<dbReference type="GO" id="GO:0005576">
    <property type="term" value="C:extracellular region"/>
    <property type="evidence" value="ECO:0007669"/>
    <property type="project" value="UniProtKB-SubCell"/>
</dbReference>
<dbReference type="GO" id="GO:0045454">
    <property type="term" value="P:cell redox homeostasis"/>
    <property type="evidence" value="ECO:0000315"/>
    <property type="project" value="TAIR"/>
</dbReference>
<dbReference type="GO" id="GO:0009740">
    <property type="term" value="P:gibberellic acid mediated signaling pathway"/>
    <property type="evidence" value="ECO:0000304"/>
    <property type="project" value="TAIR"/>
</dbReference>
<dbReference type="GO" id="GO:0009739">
    <property type="term" value="P:response to gibberellin"/>
    <property type="evidence" value="ECO:0000315"/>
    <property type="project" value="TAIR"/>
</dbReference>
<dbReference type="InterPro" id="IPR003854">
    <property type="entry name" value="GASA"/>
</dbReference>
<dbReference type="PANTHER" id="PTHR23201">
    <property type="entry name" value="EXTENSIN, PROLINE-RICH PROTEIN"/>
    <property type="match status" value="1"/>
</dbReference>
<dbReference type="PANTHER" id="PTHR23201:SF124">
    <property type="entry name" value="GIBBERELLIN-REGULATED PROTEIN 4"/>
    <property type="match status" value="1"/>
</dbReference>
<dbReference type="Pfam" id="PF02704">
    <property type="entry name" value="GASA"/>
    <property type="match status" value="1"/>
</dbReference>